<organism>
    <name type="scientific">Clostridium novyi (strain NT)</name>
    <dbReference type="NCBI Taxonomy" id="386415"/>
    <lineage>
        <taxon>Bacteria</taxon>
        <taxon>Bacillati</taxon>
        <taxon>Bacillota</taxon>
        <taxon>Clostridia</taxon>
        <taxon>Eubacteriales</taxon>
        <taxon>Clostridiaceae</taxon>
        <taxon>Clostridium</taxon>
    </lineage>
</organism>
<gene>
    <name evidence="1" type="primary">glyA</name>
    <name type="ordered locus">NT01CX_1853</name>
</gene>
<proteinExistence type="inferred from homology"/>
<sequence>MNFDNLALTDKEIFNIIQLENNRQNNTIELIASENFASKSVMEAMGSQLTNKYAEGYPSKRYYGGCEEVDKIESLAIERLKKIFGCEHANVQPHSGSQANMAVYLSVLEPGDTIMGMNLSHGGHLTHGSPVNFSGRLFNFVAYGVNKETELINYDEVRSLALQHKPKMIVAGASAYSRVIDFKRLKQICDEVGAYFMVDMAHIAGLIAAGYHPSPVPYADFVTTTTHKTLRGPRGGAILCKEKYAKQVDKAIFPGIQGGPLMHVIAAKAVCFGEALKDDYKNYIEQVVKNAKVLEEELKKYDFKLVSGGTDNHLLLIDLTNKDITGKDAEKLLDSIGITVNKNTIPFETKSPFVTSGIRIGTPAVTTRGFKEEEMKEIAYLINYVIENRDSDLSEAKNKVKEICSRHILYK</sequence>
<dbReference type="EC" id="2.1.2.1" evidence="1"/>
<dbReference type="EMBL" id="CP000382">
    <property type="protein sequence ID" value="ABK61529.1"/>
    <property type="molecule type" value="Genomic_DNA"/>
</dbReference>
<dbReference type="RefSeq" id="WP_011721930.1">
    <property type="nucleotide sequence ID" value="NC_008593.1"/>
</dbReference>
<dbReference type="SMR" id="A0PZX4"/>
<dbReference type="STRING" id="386415.NT01CX_1853"/>
<dbReference type="KEGG" id="cno:NT01CX_1853"/>
<dbReference type="eggNOG" id="COG0112">
    <property type="taxonomic scope" value="Bacteria"/>
</dbReference>
<dbReference type="HOGENOM" id="CLU_022477_2_1_9"/>
<dbReference type="UniPathway" id="UPA00193"/>
<dbReference type="UniPathway" id="UPA00288">
    <property type="reaction ID" value="UER01023"/>
</dbReference>
<dbReference type="Proteomes" id="UP000008220">
    <property type="component" value="Chromosome"/>
</dbReference>
<dbReference type="GO" id="GO:0005829">
    <property type="term" value="C:cytosol"/>
    <property type="evidence" value="ECO:0007669"/>
    <property type="project" value="TreeGrafter"/>
</dbReference>
<dbReference type="GO" id="GO:0004372">
    <property type="term" value="F:glycine hydroxymethyltransferase activity"/>
    <property type="evidence" value="ECO:0007669"/>
    <property type="project" value="UniProtKB-UniRule"/>
</dbReference>
<dbReference type="GO" id="GO:0030170">
    <property type="term" value="F:pyridoxal phosphate binding"/>
    <property type="evidence" value="ECO:0007669"/>
    <property type="project" value="UniProtKB-UniRule"/>
</dbReference>
<dbReference type="GO" id="GO:0019264">
    <property type="term" value="P:glycine biosynthetic process from serine"/>
    <property type="evidence" value="ECO:0007669"/>
    <property type="project" value="UniProtKB-UniRule"/>
</dbReference>
<dbReference type="GO" id="GO:0035999">
    <property type="term" value="P:tetrahydrofolate interconversion"/>
    <property type="evidence" value="ECO:0007669"/>
    <property type="project" value="UniProtKB-UniRule"/>
</dbReference>
<dbReference type="CDD" id="cd00378">
    <property type="entry name" value="SHMT"/>
    <property type="match status" value="1"/>
</dbReference>
<dbReference type="FunFam" id="3.40.640.10:FF:000001">
    <property type="entry name" value="Serine hydroxymethyltransferase"/>
    <property type="match status" value="1"/>
</dbReference>
<dbReference type="FunFam" id="3.90.1150.10:FF:000003">
    <property type="entry name" value="Serine hydroxymethyltransferase"/>
    <property type="match status" value="1"/>
</dbReference>
<dbReference type="Gene3D" id="3.90.1150.10">
    <property type="entry name" value="Aspartate Aminotransferase, domain 1"/>
    <property type="match status" value="1"/>
</dbReference>
<dbReference type="Gene3D" id="3.40.640.10">
    <property type="entry name" value="Type I PLP-dependent aspartate aminotransferase-like (Major domain)"/>
    <property type="match status" value="1"/>
</dbReference>
<dbReference type="HAMAP" id="MF_00051">
    <property type="entry name" value="SHMT"/>
    <property type="match status" value="1"/>
</dbReference>
<dbReference type="InterPro" id="IPR015424">
    <property type="entry name" value="PyrdxlP-dep_Trfase"/>
</dbReference>
<dbReference type="InterPro" id="IPR015421">
    <property type="entry name" value="PyrdxlP-dep_Trfase_major"/>
</dbReference>
<dbReference type="InterPro" id="IPR015422">
    <property type="entry name" value="PyrdxlP-dep_Trfase_small"/>
</dbReference>
<dbReference type="InterPro" id="IPR001085">
    <property type="entry name" value="Ser_HO-MeTrfase"/>
</dbReference>
<dbReference type="InterPro" id="IPR049943">
    <property type="entry name" value="Ser_HO-MeTrfase-like"/>
</dbReference>
<dbReference type="InterPro" id="IPR019798">
    <property type="entry name" value="Ser_HO-MeTrfase_PLP_BS"/>
</dbReference>
<dbReference type="InterPro" id="IPR039429">
    <property type="entry name" value="SHMT-like_dom"/>
</dbReference>
<dbReference type="NCBIfam" id="NF000586">
    <property type="entry name" value="PRK00011.1"/>
    <property type="match status" value="1"/>
</dbReference>
<dbReference type="PANTHER" id="PTHR11680">
    <property type="entry name" value="SERINE HYDROXYMETHYLTRANSFERASE"/>
    <property type="match status" value="1"/>
</dbReference>
<dbReference type="PANTHER" id="PTHR11680:SF35">
    <property type="entry name" value="SERINE HYDROXYMETHYLTRANSFERASE 1"/>
    <property type="match status" value="1"/>
</dbReference>
<dbReference type="Pfam" id="PF00464">
    <property type="entry name" value="SHMT"/>
    <property type="match status" value="1"/>
</dbReference>
<dbReference type="PIRSF" id="PIRSF000412">
    <property type="entry name" value="SHMT"/>
    <property type="match status" value="1"/>
</dbReference>
<dbReference type="SUPFAM" id="SSF53383">
    <property type="entry name" value="PLP-dependent transferases"/>
    <property type="match status" value="1"/>
</dbReference>
<dbReference type="PROSITE" id="PS00096">
    <property type="entry name" value="SHMT"/>
    <property type="match status" value="1"/>
</dbReference>
<accession>A0PZX4</accession>
<evidence type="ECO:0000255" key="1">
    <source>
        <dbReference type="HAMAP-Rule" id="MF_00051"/>
    </source>
</evidence>
<protein>
    <recommendedName>
        <fullName evidence="1">Serine hydroxymethyltransferase</fullName>
        <shortName evidence="1">SHMT</shortName>
        <shortName evidence="1">Serine methylase</shortName>
        <ecNumber evidence="1">2.1.2.1</ecNumber>
    </recommendedName>
</protein>
<comment type="function">
    <text evidence="1">Catalyzes the reversible interconversion of serine and glycine with tetrahydrofolate (THF) serving as the one-carbon carrier. This reaction serves as the major source of one-carbon groups required for the biosynthesis of purines, thymidylate, methionine, and other important biomolecules. Also exhibits THF-independent aldolase activity toward beta-hydroxyamino acids, producing glycine and aldehydes, via a retro-aldol mechanism.</text>
</comment>
<comment type="catalytic activity">
    <reaction evidence="1">
        <text>(6R)-5,10-methylene-5,6,7,8-tetrahydrofolate + glycine + H2O = (6S)-5,6,7,8-tetrahydrofolate + L-serine</text>
        <dbReference type="Rhea" id="RHEA:15481"/>
        <dbReference type="ChEBI" id="CHEBI:15377"/>
        <dbReference type="ChEBI" id="CHEBI:15636"/>
        <dbReference type="ChEBI" id="CHEBI:33384"/>
        <dbReference type="ChEBI" id="CHEBI:57305"/>
        <dbReference type="ChEBI" id="CHEBI:57453"/>
        <dbReference type="EC" id="2.1.2.1"/>
    </reaction>
</comment>
<comment type="cofactor">
    <cofactor evidence="1">
        <name>pyridoxal 5'-phosphate</name>
        <dbReference type="ChEBI" id="CHEBI:597326"/>
    </cofactor>
</comment>
<comment type="pathway">
    <text evidence="1">One-carbon metabolism; tetrahydrofolate interconversion.</text>
</comment>
<comment type="pathway">
    <text evidence="1">Amino-acid biosynthesis; glycine biosynthesis; glycine from L-serine: step 1/1.</text>
</comment>
<comment type="subunit">
    <text evidence="1">Homodimer.</text>
</comment>
<comment type="subcellular location">
    <subcellularLocation>
        <location evidence="1">Cytoplasm</location>
    </subcellularLocation>
</comment>
<comment type="similarity">
    <text evidence="1">Belongs to the SHMT family.</text>
</comment>
<name>GLYA_CLONN</name>
<feature type="chain" id="PRO_1000006239" description="Serine hydroxymethyltransferase">
    <location>
        <begin position="1"/>
        <end position="411"/>
    </location>
</feature>
<feature type="binding site" evidence="1">
    <location>
        <position position="119"/>
    </location>
    <ligand>
        <name>(6S)-5,6,7,8-tetrahydrofolate</name>
        <dbReference type="ChEBI" id="CHEBI:57453"/>
    </ligand>
</feature>
<feature type="binding site" evidence="1">
    <location>
        <begin position="123"/>
        <end position="125"/>
    </location>
    <ligand>
        <name>(6S)-5,6,7,8-tetrahydrofolate</name>
        <dbReference type="ChEBI" id="CHEBI:57453"/>
    </ligand>
</feature>
<feature type="binding site" evidence="1">
    <location>
        <begin position="351"/>
        <end position="353"/>
    </location>
    <ligand>
        <name>(6S)-5,6,7,8-tetrahydrofolate</name>
        <dbReference type="ChEBI" id="CHEBI:57453"/>
    </ligand>
</feature>
<feature type="site" description="Plays an important role in substrate specificity" evidence="1">
    <location>
        <position position="227"/>
    </location>
</feature>
<feature type="modified residue" description="N6-(pyridoxal phosphate)lysine" evidence="1">
    <location>
        <position position="228"/>
    </location>
</feature>
<keyword id="KW-0028">Amino-acid biosynthesis</keyword>
<keyword id="KW-0963">Cytoplasm</keyword>
<keyword id="KW-0554">One-carbon metabolism</keyword>
<keyword id="KW-0663">Pyridoxal phosphate</keyword>
<keyword id="KW-1185">Reference proteome</keyword>
<keyword id="KW-0808">Transferase</keyword>
<reference key="1">
    <citation type="journal article" date="2006" name="Nat. Biotechnol.">
        <title>The genome and transcriptomes of the anti-tumor agent Clostridium novyi-NT.</title>
        <authorList>
            <person name="Bettegowda C."/>
            <person name="Huang X."/>
            <person name="Lin J."/>
            <person name="Cheong I."/>
            <person name="Kohli M."/>
            <person name="Szabo S.A."/>
            <person name="Zhang X."/>
            <person name="Diaz L.A. Jr."/>
            <person name="Velculescu V.E."/>
            <person name="Parmigiani G."/>
            <person name="Kinzler K.W."/>
            <person name="Vogelstein B."/>
            <person name="Zhou S."/>
        </authorList>
    </citation>
    <scope>NUCLEOTIDE SEQUENCE [LARGE SCALE GENOMIC DNA]</scope>
    <source>
        <strain>NT</strain>
    </source>
</reference>